<gene>
    <name evidence="21" type="primary">ATAD5</name>
    <name type="synonym">C17orf41</name>
    <name evidence="15" type="synonym">Elg1</name>
    <name evidence="17" type="synonym">FRAG1</name>
</gene>
<protein>
    <recommendedName>
        <fullName evidence="21">ATPase family AAA domain-containing protein 5</fullName>
    </recommendedName>
    <alternativeName>
        <fullName>Chromosome fragility-associated gene 1 protein</fullName>
    </alternativeName>
</protein>
<proteinExistence type="evidence at protein level"/>
<comment type="function">
    <text evidence="6 7 8 10 11 13">Has an important role in DNA replication and in maintaining genome integrity during replication stress (PubMed:15983387, PubMed:19755857). Involved in a RAD9A-related damage checkpoint, a pathway that is important in determining whether DNA damage is compatible with cell survival or whether it requires cell elimination by apoptosis (PubMed:15983387). Modulates the RAD9A interaction with BCL2 and thereby induces DNA damage-induced apoptosis (PubMed:15983387). Promotes PCNA deubiquitination by recruiting the ubiquitin-specific protease 1 (USP1) and WDR48 thereby down-regulating the error-prone damage bypass pathway (PubMed:20147293). As component of the ATAD5 RFC-like complex, regulates the function of the DNA polymerase processivity factor PCNA by unloading the ring-shaped PCNA homotrimer from DNA after replication during the S phase of the cell cycle (PubMed:23277426, PubMed:23937667). This seems to be dependent on its ATPase activity (PubMed:23277426). Plays important roles in restarting stalled replication forks under replication stress, by unloading the PCNA homotrimer from DNA and recruiting RAD51 possibly through an ATR-dependent manner (PubMed:31844045). Ultimately this enables replication fork regression, breakage, and eventual fork restart (PubMed:31844045). Both the PCNA unloading activity and the interaction with WDR48 are required to efficiently recruit RAD51 to stalled replication forks (PubMed:31844045). Promotes the generation of MUS81-mediated single-stranded DNA-associated breaks in response to replication stress, which is an alternative pathway to restart stalled/regressed replication forks (PubMed:31844045).</text>
</comment>
<comment type="subunit">
    <text evidence="1 4 6 8 9 10 13 14 15 18 19">Component of a heteropentameric replication factor ATAD5 RFC-like complex composed of one large subunit (ATAD5) and four small subunits (RFC2, RFC3, RFC4 and RFC5) (PubMed:13678589, PubMed:20147293, PubMed:23277426). Within the ATAD5 RFC-like complex, interacts with RFC2, RFC4 and RFC5 (PubMed:13678589, PubMed:20147293, PubMed:23277426, PubMed:31844045, PubMed:39106866). Within the ATAD5 RFC-like complex, interacts directly via-N terminal with RAD51; the interactions is enhanced under replication stress (PubMed:31844045). Interacts with RB1 predominantly in G1 phase via its LXCXE motif (By similarity). Interacts with RAD9A in growing cells (PubMed:15983387). The interaction with RAD9A is reduced after exposure to DNA replication-inhibiting agents (PubMed:15983387). Interacts with BRD4 (PubMed:21555454). Interacts with PCNA (PubMed:20147293, PubMed:23277426). Interacts with deubiquitinating enzyme USP1, and its associated factor, WDR48 (PubMed:20147293, PubMed:31844045).</text>
</comment>
<comment type="subcellular location">
    <subcellularLocation>
        <location evidence="7 8">Nucleus</location>
    </subcellularLocation>
    <text evidence="7">Accumulates in nuclear foci at sites of stalled DNA replication forks in response to DNA damage.</text>
</comment>
<comment type="alternative products">
    <event type="alternative splicing"/>
    <isoform>
        <id>Q96QE3-1</id>
        <name>1</name>
        <sequence type="displayed"/>
    </isoform>
    <isoform>
        <id>Q96QE3-2</id>
        <name>2</name>
        <sequence type="described" ref="VSP_031097"/>
    </isoform>
</comment>
<comment type="PTM">
    <text>ATR may stimulate the RAD9A dissociation.</text>
</comment>
<comment type="similarity">
    <text evidence="20">Belongs to the AAA ATPase family.</text>
</comment>
<comment type="sequence caution" evidence="20">
    <conflict type="miscellaneous discrepancy">
        <sequence resource="EMBL-CDS" id="AAH15051"/>
    </conflict>
    <text>Contaminating sequence. Potential poly-A sequence.</text>
</comment>
<comment type="sequence caution" evidence="20">
    <conflict type="erroneous initiation">
        <sequence resource="EMBL-CDS" id="BAB14248"/>
    </conflict>
    <text>Truncated N-terminus.</text>
</comment>
<reference key="1">
    <citation type="journal article" date="2001" name="Am. J. Hum. Genet.">
        <title>Molecular characterization and gene content of breakpoint boundaries in patients with neurofibromatosis type 1 with 17q11.2 microdeletions.</title>
        <authorList>
            <person name="Jenne D.E."/>
            <person name="Tinschert S."/>
            <person name="Reimann H."/>
            <person name="Lasinger W."/>
            <person name="Thiel G."/>
            <person name="Hameister H."/>
            <person name="Kehrer-Sawatzki H."/>
        </authorList>
    </citation>
    <scope>NUCLEOTIDE SEQUENCE [MRNA] (ISOFORM 1)</scope>
</reference>
<reference key="2">
    <citation type="submission" date="2001-05" db="EMBL/GenBank/DDBJ databases">
        <authorList>
            <person name="Jenne D.E."/>
        </authorList>
    </citation>
    <scope>SEQUENCE REVISION</scope>
</reference>
<reference key="3">
    <citation type="journal article" date="2005" name="Proc. Natl. Acad. Sci. U.S.A.">
        <title>Frag1, a homolog of alternative replication factor C subunits, links replication stress surveillance with apoptosis.</title>
        <authorList>
            <person name="Ishii H."/>
            <person name="Inageta T."/>
            <person name="Mimori K."/>
            <person name="Saito T."/>
            <person name="Sasaki H."/>
            <person name="Isobe M."/>
            <person name="Mori M."/>
            <person name="Croce C.M."/>
            <person name="Huebner K."/>
            <person name="Ozawa K."/>
            <person name="Furukawa Y."/>
        </authorList>
    </citation>
    <scope>NUCLEOTIDE SEQUENCE [MRNA] (ISOFORM 1)</scope>
    <scope>FUNCTION</scope>
    <scope>INTERACTION WITH RAD9A</scope>
    <scope>MUTAGENESIS OF SER-1169; SER-1187; CYS-1430 AND GLU-1432</scope>
</reference>
<reference key="4">
    <citation type="journal article" date="2007" name="BMC Genomics">
        <title>The full-ORF clone resource of the German cDNA consortium.</title>
        <authorList>
            <person name="Bechtel S."/>
            <person name="Rosenfelder H."/>
            <person name="Duda A."/>
            <person name="Schmidt C.P."/>
            <person name="Ernst U."/>
            <person name="Wellenreuther R."/>
            <person name="Mehrle A."/>
            <person name="Schuster C."/>
            <person name="Bahr A."/>
            <person name="Bloecker H."/>
            <person name="Heubner D."/>
            <person name="Hoerlein A."/>
            <person name="Michel G."/>
            <person name="Wedler H."/>
            <person name="Koehrer K."/>
            <person name="Ottenwaelder B."/>
            <person name="Poustka A."/>
            <person name="Wiemann S."/>
            <person name="Schupp I."/>
        </authorList>
    </citation>
    <scope>NUCLEOTIDE SEQUENCE [LARGE SCALE MRNA] OF 1-1224 (ISOFORM 1)</scope>
    <source>
        <tissue>Bone marrow</tissue>
    </source>
</reference>
<reference key="5">
    <citation type="journal article" date="2004" name="Genome Res.">
        <title>The status, quality, and expansion of the NIH full-length cDNA project: the Mammalian Gene Collection (MGC).</title>
        <authorList>
            <consortium name="The MGC Project Team"/>
        </authorList>
    </citation>
    <scope>NUCLEOTIDE SEQUENCE [LARGE SCALE MRNA] OF 1-474 (ISOFORM 1)</scope>
    <scope>VARIANT GLY-135</scope>
    <source>
        <tissue>Uterus</tissue>
    </source>
</reference>
<reference key="6">
    <citation type="journal article" date="2004" name="Nat. Genet.">
        <title>Complete sequencing and characterization of 21,243 full-length human cDNAs.</title>
        <authorList>
            <person name="Ota T."/>
            <person name="Suzuki Y."/>
            <person name="Nishikawa T."/>
            <person name="Otsuki T."/>
            <person name="Sugiyama T."/>
            <person name="Irie R."/>
            <person name="Wakamatsu A."/>
            <person name="Hayashi K."/>
            <person name="Sato H."/>
            <person name="Nagai K."/>
            <person name="Kimura K."/>
            <person name="Makita H."/>
            <person name="Sekine M."/>
            <person name="Obayashi M."/>
            <person name="Nishi T."/>
            <person name="Shibahara T."/>
            <person name="Tanaka T."/>
            <person name="Ishii S."/>
            <person name="Yamamoto J."/>
            <person name="Saito K."/>
            <person name="Kawai Y."/>
            <person name="Isono Y."/>
            <person name="Nakamura Y."/>
            <person name="Nagahari K."/>
            <person name="Murakami K."/>
            <person name="Yasuda T."/>
            <person name="Iwayanagi T."/>
            <person name="Wagatsuma M."/>
            <person name="Shiratori A."/>
            <person name="Sudo H."/>
            <person name="Hosoiri T."/>
            <person name="Kaku Y."/>
            <person name="Kodaira H."/>
            <person name="Kondo H."/>
            <person name="Sugawara M."/>
            <person name="Takahashi M."/>
            <person name="Kanda K."/>
            <person name="Yokoi T."/>
            <person name="Furuya T."/>
            <person name="Kikkawa E."/>
            <person name="Omura Y."/>
            <person name="Abe K."/>
            <person name="Kamihara K."/>
            <person name="Katsuta N."/>
            <person name="Sato K."/>
            <person name="Tanikawa M."/>
            <person name="Yamazaki M."/>
            <person name="Ninomiya K."/>
            <person name="Ishibashi T."/>
            <person name="Yamashita H."/>
            <person name="Murakawa K."/>
            <person name="Fujimori K."/>
            <person name="Tanai H."/>
            <person name="Kimata M."/>
            <person name="Watanabe M."/>
            <person name="Hiraoka S."/>
            <person name="Chiba Y."/>
            <person name="Ishida S."/>
            <person name="Ono Y."/>
            <person name="Takiguchi S."/>
            <person name="Watanabe S."/>
            <person name="Yosida M."/>
            <person name="Hotuta T."/>
            <person name="Kusano J."/>
            <person name="Kanehori K."/>
            <person name="Takahashi-Fujii A."/>
            <person name="Hara H."/>
            <person name="Tanase T.-O."/>
            <person name="Nomura Y."/>
            <person name="Togiya S."/>
            <person name="Komai F."/>
            <person name="Hara R."/>
            <person name="Takeuchi K."/>
            <person name="Arita M."/>
            <person name="Imose N."/>
            <person name="Musashino K."/>
            <person name="Yuuki H."/>
            <person name="Oshima A."/>
            <person name="Sasaki N."/>
            <person name="Aotsuka S."/>
            <person name="Yoshikawa Y."/>
            <person name="Matsunawa H."/>
            <person name="Ichihara T."/>
            <person name="Shiohata N."/>
            <person name="Sano S."/>
            <person name="Moriya S."/>
            <person name="Momiyama H."/>
            <person name="Satoh N."/>
            <person name="Takami S."/>
            <person name="Terashima Y."/>
            <person name="Suzuki O."/>
            <person name="Nakagawa S."/>
            <person name="Senoh A."/>
            <person name="Mizoguchi H."/>
            <person name="Goto Y."/>
            <person name="Shimizu F."/>
            <person name="Wakebe H."/>
            <person name="Hishigaki H."/>
            <person name="Watanabe T."/>
            <person name="Sugiyama A."/>
            <person name="Takemoto M."/>
            <person name="Kawakami B."/>
            <person name="Yamazaki M."/>
            <person name="Watanabe K."/>
            <person name="Kumagai A."/>
            <person name="Itakura S."/>
            <person name="Fukuzumi Y."/>
            <person name="Fujimori Y."/>
            <person name="Komiyama M."/>
            <person name="Tashiro H."/>
            <person name="Tanigami A."/>
            <person name="Fujiwara T."/>
            <person name="Ono T."/>
            <person name="Yamada K."/>
            <person name="Fujii Y."/>
            <person name="Ozaki K."/>
            <person name="Hirao M."/>
            <person name="Ohmori Y."/>
            <person name="Kawabata A."/>
            <person name="Hikiji T."/>
            <person name="Kobatake N."/>
            <person name="Inagaki H."/>
            <person name="Ikema Y."/>
            <person name="Okamoto S."/>
            <person name="Okitani R."/>
            <person name="Kawakami T."/>
            <person name="Noguchi S."/>
            <person name="Itoh T."/>
            <person name="Shigeta K."/>
            <person name="Senba T."/>
            <person name="Matsumura K."/>
            <person name="Nakajima Y."/>
            <person name="Mizuno T."/>
            <person name="Morinaga M."/>
            <person name="Sasaki M."/>
            <person name="Togashi T."/>
            <person name="Oyama M."/>
            <person name="Hata H."/>
            <person name="Watanabe M."/>
            <person name="Komatsu T."/>
            <person name="Mizushima-Sugano J."/>
            <person name="Satoh T."/>
            <person name="Shirai Y."/>
            <person name="Takahashi Y."/>
            <person name="Nakagawa K."/>
            <person name="Okumura K."/>
            <person name="Nagase T."/>
            <person name="Nomura N."/>
            <person name="Kikuchi H."/>
            <person name="Masuho Y."/>
            <person name="Yamashita R."/>
            <person name="Nakai K."/>
            <person name="Yada T."/>
            <person name="Nakamura Y."/>
            <person name="Ohara O."/>
            <person name="Isogai T."/>
            <person name="Sugano S."/>
        </authorList>
    </citation>
    <scope>NUCLEOTIDE SEQUENCE [LARGE SCALE MRNA] OF 377-1844 (ISOFORM 2)</scope>
</reference>
<reference key="7">
    <citation type="journal article" date="2006" name="Nature">
        <title>DNA sequence of human chromosome 17 and analysis of rearrangement in the human lineage.</title>
        <authorList>
            <person name="Zody M.C."/>
            <person name="Garber M."/>
            <person name="Adams D.J."/>
            <person name="Sharpe T."/>
            <person name="Harrow J."/>
            <person name="Lupski J.R."/>
            <person name="Nicholson C."/>
            <person name="Searle S.M."/>
            <person name="Wilming L."/>
            <person name="Young S.K."/>
            <person name="Abouelleil A."/>
            <person name="Allen N.R."/>
            <person name="Bi W."/>
            <person name="Bloom T."/>
            <person name="Borowsky M.L."/>
            <person name="Bugalter B.E."/>
            <person name="Butler J."/>
            <person name="Chang J.L."/>
            <person name="Chen C.-K."/>
            <person name="Cook A."/>
            <person name="Corum B."/>
            <person name="Cuomo C.A."/>
            <person name="de Jong P.J."/>
            <person name="DeCaprio D."/>
            <person name="Dewar K."/>
            <person name="FitzGerald M."/>
            <person name="Gilbert J."/>
            <person name="Gibson R."/>
            <person name="Gnerre S."/>
            <person name="Goldstein S."/>
            <person name="Grafham D.V."/>
            <person name="Grocock R."/>
            <person name="Hafez N."/>
            <person name="Hagopian D.S."/>
            <person name="Hart E."/>
            <person name="Norman C.H."/>
            <person name="Humphray S."/>
            <person name="Jaffe D.B."/>
            <person name="Jones M."/>
            <person name="Kamal M."/>
            <person name="Khodiyar V.K."/>
            <person name="LaButti K."/>
            <person name="Laird G."/>
            <person name="Lehoczky J."/>
            <person name="Liu X."/>
            <person name="Lokyitsang T."/>
            <person name="Loveland J."/>
            <person name="Lui A."/>
            <person name="Macdonald P."/>
            <person name="Major J.E."/>
            <person name="Matthews L."/>
            <person name="Mauceli E."/>
            <person name="McCarroll S.A."/>
            <person name="Mihalev A.H."/>
            <person name="Mudge J."/>
            <person name="Nguyen C."/>
            <person name="Nicol R."/>
            <person name="O'Leary S.B."/>
            <person name="Osoegawa K."/>
            <person name="Schwartz D.C."/>
            <person name="Shaw-Smith C."/>
            <person name="Stankiewicz P."/>
            <person name="Steward C."/>
            <person name="Swarbreck D."/>
            <person name="Venkataraman V."/>
            <person name="Whittaker C.A."/>
            <person name="Yang X."/>
            <person name="Zimmer A.R."/>
            <person name="Bradley A."/>
            <person name="Hubbard T."/>
            <person name="Birren B.W."/>
            <person name="Rogers J."/>
            <person name="Lander E.S."/>
            <person name="Nusbaum C."/>
        </authorList>
    </citation>
    <scope>NUCLEOTIDE SEQUENCE [LARGE SCALE GENOMIC DNA]</scope>
</reference>
<reference key="8">
    <citation type="journal article" date="2003" name="Curr. Biol.">
        <title>Elg1 forms an alternative PCNA-interacting RFC complex required to maintain genome stability.</title>
        <authorList>
            <person name="Kanellis P."/>
            <person name="Agyei R."/>
            <person name="Durocher D."/>
        </authorList>
    </citation>
    <scope>INTERACTION WITH RFC2</scope>
</reference>
<reference key="9">
    <citation type="journal article" date="2007" name="Science">
        <title>ATM and ATR substrate analysis reveals extensive protein networks responsive to DNA damage.</title>
        <authorList>
            <person name="Matsuoka S."/>
            <person name="Ballif B.A."/>
            <person name="Smogorzewska A."/>
            <person name="McDonald E.R. III"/>
            <person name="Hurov K.E."/>
            <person name="Luo J."/>
            <person name="Bakalarski C.E."/>
            <person name="Zhao Z."/>
            <person name="Solimini N."/>
            <person name="Lerenthal Y."/>
            <person name="Shiloh Y."/>
            <person name="Gygi S.P."/>
            <person name="Elledge S.J."/>
        </authorList>
    </citation>
    <scope>PHOSPHORYLATION [LARGE SCALE ANALYSIS] AT SER-621</scope>
    <scope>IDENTIFICATION BY MASS SPECTROMETRY [LARGE SCALE ANALYSIS]</scope>
    <source>
        <tissue>Embryonic kidney</tissue>
    </source>
</reference>
<reference key="10">
    <citation type="journal article" date="2008" name="J. Proteome Res.">
        <title>Combining protein-based IMAC, peptide-based IMAC, and MudPIT for efficient phosphoproteomic analysis.</title>
        <authorList>
            <person name="Cantin G.T."/>
            <person name="Yi W."/>
            <person name="Lu B."/>
            <person name="Park S.K."/>
            <person name="Xu T."/>
            <person name="Lee J.-D."/>
            <person name="Yates J.R. III"/>
        </authorList>
    </citation>
    <scope>IDENTIFICATION BY MASS SPECTROMETRY [LARGE SCALE ANALYSIS]</scope>
    <source>
        <tissue>Cervix carcinoma</tissue>
    </source>
</reference>
<reference key="11">
    <citation type="journal article" date="2008" name="Proc. Natl. Acad. Sci. U.S.A.">
        <title>A quantitative atlas of mitotic phosphorylation.</title>
        <authorList>
            <person name="Dephoure N."/>
            <person name="Zhou C."/>
            <person name="Villen J."/>
            <person name="Beausoleil S.A."/>
            <person name="Bakalarski C.E."/>
            <person name="Elledge S.J."/>
            <person name="Gygi S.P."/>
        </authorList>
    </citation>
    <scope>PHOSPHORYLATION [LARGE SCALE ANALYSIS] AT SER-44; SER-306; SER-369 AND SER-1116</scope>
    <scope>IDENTIFICATION BY MASS SPECTROMETRY [LARGE SCALE ANALYSIS]</scope>
    <source>
        <tissue>Cervix carcinoma</tissue>
    </source>
</reference>
<reference key="12">
    <citation type="journal article" date="2009" name="Cell Cycle">
        <title>DNA damage responses by human ELG1 in S phase are important to maintain genomic integrity.</title>
        <authorList>
            <person name="Sikdar N."/>
            <person name="Banerjee S."/>
            <person name="Lee K.Y."/>
            <person name="Wincovitch S."/>
            <person name="Pak E."/>
            <person name="Nakanishi K."/>
            <person name="Jasin M."/>
            <person name="Dutra A."/>
            <person name="Myung K."/>
        </authorList>
    </citation>
    <scope>FUNCTION</scope>
    <scope>SUBCELLULAR LOCATION</scope>
</reference>
<reference key="13">
    <citation type="journal article" date="2009" name="Sci. Signal.">
        <title>Quantitative phosphoproteomic analysis of T cell receptor signaling reveals system-wide modulation of protein-protein interactions.</title>
        <authorList>
            <person name="Mayya V."/>
            <person name="Lundgren D.H."/>
            <person name="Hwang S.-I."/>
            <person name="Rezaul K."/>
            <person name="Wu L."/>
            <person name="Eng J.K."/>
            <person name="Rodionov V."/>
            <person name="Han D.K."/>
        </authorList>
    </citation>
    <scope>PHOSPHORYLATION [LARGE SCALE ANALYSIS] AT SER-306; SER-311 AND SER-614</scope>
    <scope>IDENTIFICATION BY MASS SPECTROMETRY [LARGE SCALE ANALYSIS]</scope>
    <source>
        <tissue>Leukemic T-cell</tissue>
    </source>
</reference>
<reference key="14">
    <citation type="journal article" date="2010" name="J. Biol. Chem.">
        <title>Human ELG1 regulates the level of ubiquitinated proliferating cell nuclear antigen (PCNA) through Its interactions with PCNA and USP1.</title>
        <authorList>
            <person name="Lee K.Y."/>
            <person name="Yang K."/>
            <person name="Cohn M.A."/>
            <person name="Sikdar N."/>
            <person name="D'Andrea A.D."/>
            <person name="Myung K."/>
        </authorList>
    </citation>
    <scope>FUNCTION</scope>
    <scope>INTERACTION WITH USP1; WDR48; PCNA AND RFC4</scope>
    <scope>SUBCELLULAR LOCATION</scope>
    <scope>MUTAGENESIS OF 368-LYS--GLU-384</scope>
</reference>
<reference key="15">
    <citation type="journal article" date="2010" name="Sci. Signal.">
        <title>Quantitative phosphoproteomics reveals widespread full phosphorylation site occupancy during mitosis.</title>
        <authorList>
            <person name="Olsen J.V."/>
            <person name="Vermeulen M."/>
            <person name="Santamaria A."/>
            <person name="Kumar C."/>
            <person name="Miller M.L."/>
            <person name="Jensen L.J."/>
            <person name="Gnad F."/>
            <person name="Cox J."/>
            <person name="Jensen T.S."/>
            <person name="Nigg E.A."/>
            <person name="Brunak S."/>
            <person name="Mann M."/>
        </authorList>
    </citation>
    <scope>PHOSPHORYLATION [LARGE SCALE ANALYSIS] AT SER-219</scope>
    <scope>IDENTIFICATION BY MASS SPECTROMETRY [LARGE SCALE ANALYSIS]</scope>
    <source>
        <tissue>Cervix carcinoma</tissue>
    </source>
</reference>
<reference key="16">
    <citation type="journal article" date="2011" name="Mol. Cell. Biol.">
        <title>The Brd4 extraterminal domain confers transcription activation independent of pTEFb by recruiting multiple proteins, including NSD3.</title>
        <authorList>
            <person name="Rahman S."/>
            <person name="Sowa M.E."/>
            <person name="Ottinger M."/>
            <person name="Smith J.A."/>
            <person name="Shi Y."/>
            <person name="Harper J.W."/>
            <person name="Howley P.M."/>
        </authorList>
    </citation>
    <scope>INTERACTION WITH BRD4</scope>
</reference>
<reference key="17">
    <citation type="journal article" date="2011" name="Sci. Signal.">
        <title>System-wide temporal characterization of the proteome and phosphoproteome of human embryonic stem cell differentiation.</title>
        <authorList>
            <person name="Rigbolt K.T."/>
            <person name="Prokhorova T.A."/>
            <person name="Akimov V."/>
            <person name="Henningsen J."/>
            <person name="Johansen P.T."/>
            <person name="Kratchmarova I."/>
            <person name="Kassem M."/>
            <person name="Mann M."/>
            <person name="Olsen J.V."/>
            <person name="Blagoev B."/>
        </authorList>
    </citation>
    <scope>PHOSPHORYLATION [LARGE SCALE ANALYSIS] AT SER-614</scope>
    <scope>IDENTIFICATION BY MASS SPECTROMETRY [LARGE SCALE ANALYSIS]</scope>
</reference>
<reference key="18">
    <citation type="journal article" date="2013" name="Genes Cells">
        <title>Alternative replication factor C protein, Elg1, maintains chromosome stability by regulating PCNA levels on chromatin.</title>
        <authorList>
            <person name="Shiomi Y."/>
            <person name="Nishitani H."/>
        </authorList>
    </citation>
    <scope>FUNCTION</scope>
</reference>
<reference key="19">
    <citation type="journal article" date="2013" name="J. Cell Biol.">
        <title>ATAD5 regulates the lifespan of DNA replication factories by modulating PCNA level on the chromatin.</title>
        <authorList>
            <person name="Lee K.Y."/>
            <person name="Fu H."/>
            <person name="Aladjem M.I."/>
            <person name="Myung K."/>
        </authorList>
    </citation>
    <scope>FUNCTION</scope>
    <scope>INTERACTION WITH RFC4 AND PCNA</scope>
    <scope>MUTAGENESIS OF 368-LYS--GLU-384 AND LYS-1138</scope>
</reference>
<reference key="20">
    <citation type="journal article" date="2013" name="J. Proteome Res.">
        <title>Toward a comprehensive characterization of a human cancer cell phosphoproteome.</title>
        <authorList>
            <person name="Zhou H."/>
            <person name="Di Palma S."/>
            <person name="Preisinger C."/>
            <person name="Peng M."/>
            <person name="Polat A.N."/>
            <person name="Heck A.J."/>
            <person name="Mohammed S."/>
        </authorList>
    </citation>
    <scope>PHOSPHORYLATION [LARGE SCALE ANALYSIS] AT SER-306; SER-602 AND SER-817</scope>
    <scope>IDENTIFICATION BY MASS SPECTROMETRY [LARGE SCALE ANALYSIS]</scope>
    <source>
        <tissue>Cervix carcinoma</tissue>
        <tissue>Erythroleukemia</tissue>
    </source>
</reference>
<reference key="21">
    <citation type="journal article" date="2017" name="Nat. Struct. Mol. Biol.">
        <title>Site-specific mapping of the human SUMO proteome reveals co-modification with phosphorylation.</title>
        <authorList>
            <person name="Hendriks I.A."/>
            <person name="Lyon D."/>
            <person name="Young C."/>
            <person name="Jensen L.J."/>
            <person name="Vertegaal A.C."/>
            <person name="Nielsen M.L."/>
        </authorList>
    </citation>
    <scope>SUMOYLATION [LARGE SCALE ANALYSIS] AT LYS-127</scope>
    <scope>IDENTIFICATION BY MASS SPECTROMETRY [LARGE SCALE ANALYSIS]</scope>
</reference>
<reference key="22">
    <citation type="journal article" date="2019" name="Nat. Commun.">
        <title>ATAD5 promotes replication restart by regulating RAD51 and PCNA in response to replication stress.</title>
        <authorList>
            <person name="Park S.H."/>
            <person name="Kang N."/>
            <person name="Song E."/>
            <person name="Wie M."/>
            <person name="Lee E.A."/>
            <person name="Hwang S."/>
            <person name="Lee D."/>
            <person name="Ra J.S."/>
            <person name="Park I.B."/>
            <person name="Park J."/>
            <person name="Kang S."/>
            <person name="Park J.H."/>
            <person name="Hohng S."/>
            <person name="Lee K.Y."/>
            <person name="Myung K."/>
        </authorList>
    </citation>
    <scope>FUNCTION</scope>
    <scope>INTERACTION WITH RAD51; RFC5 AND WDR48</scope>
    <scope>MUTAGENESIS OF 368-LYS--GLU-384; 642-ALA--ILE-645 AND LYS-1138</scope>
</reference>
<reference key="23">
    <citation type="journal article" date="2024" name="Am. J. Hum. Genet.">
        <title>Expanding the genetic and phenotypic landscape of replication factor C complex-related disorders: RFC4 deficiency is linked to a multisystemic disorder.</title>
        <authorList>
            <consortium name="University of Washington Center for Rare Disease Research"/>
            <consortium name="Undiagnosed Diseases Network"/>
            <person name="Morimoto M."/>
            <person name="Ryu E."/>
            <person name="Steger B.J."/>
            <person name="Dixit A."/>
            <person name="Saito Y."/>
            <person name="Yoo J."/>
            <person name="van der Ven A.T."/>
            <person name="Hauser N."/>
            <person name="Steinbach P.J."/>
            <person name="Oura K."/>
            <person name="Huang A.Y."/>
            <person name="Kortuem F."/>
            <person name="Ninomiya S."/>
            <person name="Rosenthal E.A."/>
            <person name="Robinson H.K."/>
            <person name="Guegan K."/>
            <person name="Denecke J."/>
            <person name="Subramony S.H."/>
            <person name="Diamonstein C.J."/>
            <person name="Ping J."/>
            <person name="Fenner M."/>
            <person name="Balton E.V."/>
            <person name="Strohbehn S."/>
            <person name="Allworth A."/>
            <person name="Bamshad M.J."/>
            <person name="Gandhi M."/>
            <person name="Dipple K.M."/>
            <person name="Blue E.E."/>
            <person name="Jarvik G.P."/>
            <person name="Lau C.C."/>
            <person name="Holm I.A."/>
            <person name="Weisz-Hubshman M."/>
            <person name="Solomon B.D."/>
            <person name="Nelson S.F."/>
            <person name="Nishino I."/>
            <person name="Adams D.R."/>
            <person name="Kang S."/>
            <person name="Gahl W.A."/>
            <person name="Toro C."/>
            <person name="Myung K."/>
            <person name="Malicdan M.C.V."/>
        </authorList>
    </citation>
    <scope>INTERACTION WITH RFC4</scope>
</reference>
<reference key="24">
    <citation type="journal article" date="2015" name="Orphanet J. Rare Dis.">
        <title>EPS8L2 is a new causal gene for childhood onset autosomal recessive progressive hearing loss.</title>
        <authorList>
            <person name="Dahmani M."/>
            <person name="Ammar-Khodja F."/>
            <person name="Bonnet C."/>
            <person name="Lefevre G.M."/>
            <person name="Hardelin J.P."/>
            <person name="Ibrahim H."/>
            <person name="Mallek Z."/>
            <person name="Petit C."/>
        </authorList>
    </citation>
    <scope>VARIANT ASN-215</scope>
</reference>
<evidence type="ECO:0000250" key="1">
    <source>
        <dbReference type="UniProtKB" id="Q4QY64"/>
    </source>
</evidence>
<evidence type="ECO:0000255" key="2">
    <source>
        <dbReference type="PROSITE-ProRule" id="PRU00499"/>
    </source>
</evidence>
<evidence type="ECO:0000256" key="3">
    <source>
        <dbReference type="SAM" id="MobiDB-lite"/>
    </source>
</evidence>
<evidence type="ECO:0000269" key="4">
    <source>
    </source>
</evidence>
<evidence type="ECO:0000269" key="5">
    <source>
    </source>
</evidence>
<evidence type="ECO:0000269" key="6">
    <source>
    </source>
</evidence>
<evidence type="ECO:0000269" key="7">
    <source>
    </source>
</evidence>
<evidence type="ECO:0000269" key="8">
    <source>
    </source>
</evidence>
<evidence type="ECO:0000269" key="9">
    <source>
    </source>
</evidence>
<evidence type="ECO:0000269" key="10">
    <source>
    </source>
</evidence>
<evidence type="ECO:0000269" key="11">
    <source>
    </source>
</evidence>
<evidence type="ECO:0000269" key="12">
    <source>
    </source>
</evidence>
<evidence type="ECO:0000269" key="13">
    <source>
    </source>
</evidence>
<evidence type="ECO:0000269" key="14">
    <source>
    </source>
</evidence>
<evidence type="ECO:0000303" key="15">
    <source>
    </source>
</evidence>
<evidence type="ECO:0000303" key="16">
    <source>
    </source>
</evidence>
<evidence type="ECO:0000303" key="17">
    <source>
    </source>
</evidence>
<evidence type="ECO:0000303" key="18">
    <source>
    </source>
</evidence>
<evidence type="ECO:0000303" key="19">
    <source>
    </source>
</evidence>
<evidence type="ECO:0000305" key="20"/>
<evidence type="ECO:0000312" key="21">
    <source>
        <dbReference type="HGNC" id="HGNC:25752"/>
    </source>
</evidence>
<evidence type="ECO:0007744" key="22">
    <source>
    </source>
</evidence>
<evidence type="ECO:0007744" key="23">
    <source>
    </source>
</evidence>
<evidence type="ECO:0007744" key="24">
    <source>
    </source>
</evidence>
<evidence type="ECO:0007744" key="25">
    <source>
    </source>
</evidence>
<evidence type="ECO:0007744" key="26">
    <source>
    </source>
</evidence>
<evidence type="ECO:0007744" key="27">
    <source>
    </source>
</evidence>
<evidence type="ECO:0007744" key="28">
    <source>
    </source>
</evidence>
<evidence type="ECO:0007829" key="29">
    <source>
        <dbReference type="PDB" id="8UI8"/>
    </source>
</evidence>
<evidence type="ECO:0007829" key="30">
    <source>
        <dbReference type="PDB" id="8UII"/>
    </source>
</evidence>
<feature type="chain" id="PRO_0000317618" description="ATPase family AAA domain-containing protein 5">
    <location>
        <begin position="1"/>
        <end position="1844"/>
    </location>
</feature>
<feature type="region of interest" description="Disordered" evidence="3">
    <location>
        <begin position="178"/>
        <end position="204"/>
    </location>
</feature>
<feature type="region of interest" description="Interaction with WDR48" evidence="8">
    <location>
        <begin position="368"/>
        <end position="384"/>
    </location>
</feature>
<feature type="region of interest" description="Disordered" evidence="3">
    <location>
        <begin position="477"/>
        <end position="499"/>
    </location>
</feature>
<feature type="region of interest" description="Disordered" evidence="3">
    <location>
        <begin position="580"/>
        <end position="623"/>
    </location>
</feature>
<feature type="region of interest" description="Disordered" evidence="3">
    <location>
        <begin position="658"/>
        <end position="700"/>
    </location>
</feature>
<feature type="region of interest" description="Disordered" evidence="3">
    <location>
        <begin position="987"/>
        <end position="1047"/>
    </location>
</feature>
<feature type="region of interest" description="Disordered" evidence="3">
    <location>
        <begin position="1092"/>
        <end position="1118"/>
    </location>
</feature>
<feature type="region of interest" description="Disordered" evidence="3">
    <location>
        <begin position="1203"/>
        <end position="1235"/>
    </location>
</feature>
<feature type="region of interest" description="Disordered" evidence="3">
    <location>
        <begin position="1272"/>
        <end position="1292"/>
    </location>
</feature>
<feature type="region of interest" description="Disordered" evidence="3">
    <location>
        <begin position="1591"/>
        <end position="1635"/>
    </location>
</feature>
<feature type="region of interest" description="Interaction with RAD51 and RFC5" evidence="13">
    <location>
        <begin position="1630"/>
        <end position="1719"/>
    </location>
</feature>
<feature type="short sequence motif" description="LXCXE motif">
    <location>
        <begin position="1428"/>
        <end position="1432"/>
    </location>
</feature>
<feature type="compositionally biased region" description="Polar residues" evidence="3">
    <location>
        <begin position="178"/>
        <end position="199"/>
    </location>
</feature>
<feature type="compositionally biased region" description="Polar residues" evidence="3">
    <location>
        <begin position="580"/>
        <end position="592"/>
    </location>
</feature>
<feature type="compositionally biased region" description="Polar residues" evidence="3">
    <location>
        <begin position="599"/>
        <end position="608"/>
    </location>
</feature>
<feature type="compositionally biased region" description="Basic residues" evidence="3">
    <location>
        <begin position="664"/>
        <end position="673"/>
    </location>
</feature>
<feature type="compositionally biased region" description="Polar residues" evidence="3">
    <location>
        <begin position="685"/>
        <end position="700"/>
    </location>
</feature>
<feature type="compositionally biased region" description="Basic and acidic residues" evidence="3">
    <location>
        <begin position="987"/>
        <end position="1032"/>
    </location>
</feature>
<feature type="compositionally biased region" description="Basic and acidic residues" evidence="3">
    <location>
        <begin position="1092"/>
        <end position="1106"/>
    </location>
</feature>
<feature type="compositionally biased region" description="Polar residues" evidence="3">
    <location>
        <begin position="1272"/>
        <end position="1285"/>
    </location>
</feature>
<feature type="compositionally biased region" description="Basic and acidic residues" evidence="3">
    <location>
        <begin position="1602"/>
        <end position="1624"/>
    </location>
</feature>
<feature type="binding site" evidence="2">
    <location>
        <begin position="1132"/>
        <end position="1139"/>
    </location>
    <ligand>
        <name>ATP</name>
        <dbReference type="ChEBI" id="CHEBI:30616"/>
    </ligand>
</feature>
<feature type="modified residue" description="Phosphoserine" evidence="23">
    <location>
        <position position="44"/>
    </location>
</feature>
<feature type="modified residue" description="Phosphoserine" evidence="25">
    <location>
        <position position="219"/>
    </location>
</feature>
<feature type="modified residue" description="Phosphoserine" evidence="23 24 27">
    <location>
        <position position="306"/>
    </location>
</feature>
<feature type="modified residue" description="Phosphoserine" evidence="24">
    <location>
        <position position="311"/>
    </location>
</feature>
<feature type="modified residue" description="Phosphoserine" evidence="1">
    <location>
        <position position="354"/>
    </location>
</feature>
<feature type="modified residue" description="Phosphoserine" evidence="23">
    <location>
        <position position="369"/>
    </location>
</feature>
<feature type="modified residue" description="Phosphoserine" evidence="27">
    <location>
        <position position="602"/>
    </location>
</feature>
<feature type="modified residue" description="Phosphoserine" evidence="24 26">
    <location>
        <position position="614"/>
    </location>
</feature>
<feature type="modified residue" description="Phosphoserine" evidence="22">
    <location>
        <position position="621"/>
    </location>
</feature>
<feature type="modified residue" description="Phosphoserine" evidence="27">
    <location>
        <position position="817"/>
    </location>
</feature>
<feature type="modified residue" description="Phosphoserine" evidence="23">
    <location>
        <position position="1116"/>
    </location>
</feature>
<feature type="cross-link" description="Glycyl lysine isopeptide (Lys-Gly) (interchain with G-Cter in SUMO2)" evidence="28">
    <location>
        <position position="127"/>
    </location>
</feature>
<feature type="splice variant" id="VSP_031097" description="In isoform 2." evidence="16">
    <location>
        <begin position="1205"/>
        <end position="1844"/>
    </location>
</feature>
<feature type="sequence variant" id="VAR_038572" description="In dbSNP:rs9910051.">
    <original>T</original>
    <variation>S</variation>
    <location>
        <position position="35"/>
    </location>
</feature>
<feature type="sequence variant" id="VAR_038573" description="In dbSNP:rs3816780.">
    <original>P</original>
    <variation>S</variation>
    <location>
        <position position="87"/>
    </location>
</feature>
<feature type="sequence variant" id="VAR_038574" description="In dbSNP:rs11080134." evidence="5">
    <original>E</original>
    <variation>G</variation>
    <location>
        <position position="135"/>
    </location>
</feature>
<feature type="sequence variant" id="VAR_079496" description="In dbSNP:rs367699401." evidence="12">
    <original>D</original>
    <variation>N</variation>
    <location>
        <position position="215"/>
    </location>
</feature>
<feature type="sequence variant" id="VAR_038575" description="In dbSNP:rs17826219.">
    <original>R</original>
    <variation>K</variation>
    <location>
        <position position="249"/>
    </location>
</feature>
<feature type="sequence variant" id="VAR_038576" description="In dbSNP:rs3764421.">
    <original>N</original>
    <variation>H</variation>
    <location>
        <position position="699"/>
    </location>
</feature>
<feature type="sequence variant" id="VAR_038577" description="In dbSNP:rs11657270.">
    <original>Y</original>
    <variation>H</variation>
    <location>
        <position position="1419"/>
    </location>
</feature>
<feature type="mutagenesis site" description="Abolishes interaction with WDR48 and recruitment of RAD51 at site of stalled replication forks under replication stress. Reduces down-regulation of PCNA monoubiquitination but retains the ability to unload PCNA from chromatin." evidence="8 10 13">
    <location>
        <begin position="368"/>
        <end position="384"/>
    </location>
</feature>
<feature type="mutagenesis site" description="Loss of interaction with RAD51 and loading of RAD51 to stalled replication forks during replication stress. Loss of processing of stalled replication forks. Retains PCNA-unloading ability." evidence="13">
    <location>
        <begin position="642"/>
        <end position="645"/>
    </location>
</feature>
<feature type="mutagenesis site" description="Results in defective PCNA removal from chromatin and recruitment of RAD51 at site of stalled replication forks under replication stress. Loss of processing of stalled replication forks. Retains interaction with PCNA and RFC4." evidence="10 13">
    <original>K</original>
    <variation>E</variation>
    <location>
        <position position="1138"/>
    </location>
</feature>
<feature type="mutagenesis site" description="No effect on the RAD9A interaction after MMS exposure. Resists to DNA damage after MMS exposure." evidence="6">
    <original>S</original>
    <variation>A</variation>
    <location>
        <position position="1169"/>
    </location>
</feature>
<feature type="mutagenesis site" description="Weakly affects the RAD9A interaction after MMS exposure." evidence="6">
    <original>S</original>
    <variation>A</variation>
    <location>
        <position position="1187"/>
    </location>
</feature>
<feature type="mutagenesis site" description="Abolishes RB1 binding. Abolishes RB1 binding; when associated with K-1432. Weakly detected after methyl methane-sulfonate (MMS) treatment. Expression detected after MMS treatment; when associated with K-1432. Weakly affects the RAD9A interaction after MMS exposure. No effect on the RAD9A interaction after MMS exposure; when associated with K-1432. Resists to DNA damage after MMS exposure; when associated with K-1432." evidence="6">
    <original>C</original>
    <variation>G</variation>
    <location>
        <position position="1430"/>
    </location>
</feature>
<feature type="mutagenesis site" description="Abolishes RB1 binding; when associated with G-1430. Expression detected after methyl methane-sulfonate (MMS) treatment; when associated with G-1430. No effect on the RAD9A interaction after MMS exposure; when associated with G-1430. Resists to DNA damage after MMS exposure; when associated with G-1430." evidence="6">
    <original>E</original>
    <variation>K</variation>
    <location>
        <position position="1432"/>
    </location>
</feature>
<feature type="sequence conflict" description="In Ref. 4; CAH10412." evidence="20" ref="4">
    <original>N</original>
    <variation>D</variation>
    <location>
        <position position="95"/>
    </location>
</feature>
<feature type="sequence conflict" description="In Ref. 4; CAH10412." evidence="20" ref="4">
    <original>T</original>
    <variation>A</variation>
    <location>
        <position position="465"/>
    </location>
</feature>
<feature type="sequence conflict" description="In Ref. 6; BAB14248." evidence="20" ref="6">
    <original>N</original>
    <variation>D</variation>
    <location>
        <position position="475"/>
    </location>
</feature>
<feature type="sequence conflict" description="In Ref. 4; CAH10412." evidence="20" ref="4">
    <original>I</original>
    <variation>T</variation>
    <location>
        <position position="612"/>
    </location>
</feature>
<feature type="sequence conflict" description="In Ref. 6; BAB14248." evidence="20" ref="6">
    <original>K</original>
    <variation>S</variation>
    <location>
        <position position="1203"/>
    </location>
</feature>
<feature type="helix" evidence="30">
    <location>
        <begin position="878"/>
        <end position="880"/>
    </location>
</feature>
<feature type="helix" evidence="30">
    <location>
        <begin position="891"/>
        <end position="894"/>
    </location>
</feature>
<feature type="turn" evidence="29">
    <location>
        <begin position="906"/>
        <end position="908"/>
    </location>
</feature>
<feature type="strand" evidence="30">
    <location>
        <begin position="915"/>
        <end position="917"/>
    </location>
</feature>
<feature type="strand" evidence="30">
    <location>
        <begin position="926"/>
        <end position="928"/>
    </location>
</feature>
<feature type="helix" evidence="30">
    <location>
        <begin position="941"/>
        <end position="954"/>
    </location>
</feature>
<feature type="strand" evidence="29">
    <location>
        <begin position="956"/>
        <end position="958"/>
    </location>
</feature>
<feature type="turn" evidence="30">
    <location>
        <begin position="961"/>
        <end position="963"/>
    </location>
</feature>
<feature type="helix" evidence="30">
    <location>
        <begin position="964"/>
        <end position="971"/>
    </location>
</feature>
<feature type="helix" evidence="30">
    <location>
        <begin position="1054"/>
        <end position="1057"/>
    </location>
</feature>
<feature type="helix" evidence="29">
    <location>
        <begin position="1063"/>
        <end position="1065"/>
    </location>
</feature>
<feature type="helix" evidence="30">
    <location>
        <begin position="1070"/>
        <end position="1097"/>
    </location>
</feature>
<feature type="turn" evidence="30">
    <location>
        <begin position="1120"/>
        <end position="1122"/>
    </location>
</feature>
<feature type="strand" evidence="30">
    <location>
        <begin position="1126"/>
        <end position="1131"/>
    </location>
</feature>
<feature type="helix" evidence="30">
    <location>
        <begin position="1138"/>
        <end position="1148"/>
    </location>
</feature>
<feature type="strand" evidence="30">
    <location>
        <begin position="1151"/>
        <end position="1156"/>
    </location>
</feature>
<feature type="helix" evidence="30">
    <location>
        <begin position="1164"/>
        <end position="1176"/>
    </location>
</feature>
<feature type="strand" evidence="30">
    <location>
        <begin position="1183"/>
        <end position="1185"/>
    </location>
</feature>
<feature type="strand" evidence="30">
    <location>
        <begin position="1299"/>
        <end position="1305"/>
    </location>
</feature>
<feature type="strand" evidence="30">
    <location>
        <begin position="1312"/>
        <end position="1314"/>
    </location>
</feature>
<feature type="helix" evidence="30">
    <location>
        <begin position="1317"/>
        <end position="1326"/>
    </location>
</feature>
<feature type="strand" evidence="30">
    <location>
        <begin position="1332"/>
        <end position="1336"/>
    </location>
</feature>
<feature type="helix" evidence="30">
    <location>
        <begin position="1341"/>
        <end position="1344"/>
    </location>
</feature>
<feature type="strand" evidence="30">
    <location>
        <begin position="1350"/>
        <end position="1353"/>
    </location>
</feature>
<feature type="helix" evidence="30">
    <location>
        <begin position="1359"/>
        <end position="1372"/>
    </location>
</feature>
<feature type="helix" evidence="30">
    <location>
        <begin position="1379"/>
        <end position="1388"/>
    </location>
</feature>
<feature type="turn" evidence="30">
    <location>
        <begin position="1389"/>
        <end position="1391"/>
    </location>
</feature>
<feature type="helix" evidence="30">
    <location>
        <begin position="1393"/>
        <end position="1405"/>
    </location>
</feature>
<feature type="helix" evidence="30">
    <location>
        <begin position="1458"/>
        <end position="1462"/>
    </location>
</feature>
<feature type="turn" evidence="30">
    <location>
        <begin position="1463"/>
        <end position="1468"/>
    </location>
</feature>
<feature type="helix" evidence="30">
    <location>
        <begin position="1475"/>
        <end position="1480"/>
    </location>
</feature>
<feature type="helix" evidence="30">
    <location>
        <begin position="1486"/>
        <end position="1500"/>
    </location>
</feature>
<feature type="turn" evidence="30">
    <location>
        <begin position="1501"/>
        <end position="1503"/>
    </location>
</feature>
<feature type="helix" evidence="30">
    <location>
        <begin position="1506"/>
        <end position="1509"/>
    </location>
</feature>
<feature type="helix" evidence="30">
    <location>
        <begin position="1511"/>
        <end position="1514"/>
    </location>
</feature>
<feature type="strand" evidence="30">
    <location>
        <begin position="1515"/>
        <end position="1517"/>
    </location>
</feature>
<feature type="strand" evidence="30">
    <location>
        <begin position="1519"/>
        <end position="1521"/>
    </location>
</feature>
<feature type="helix" evidence="30">
    <location>
        <begin position="1633"/>
        <end position="1662"/>
    </location>
</feature>
<feature type="strand" evidence="30">
    <location>
        <begin position="1669"/>
        <end position="1673"/>
    </location>
</feature>
<feature type="strand" evidence="30">
    <location>
        <begin position="1675"/>
        <end position="1677"/>
    </location>
</feature>
<feature type="strand" evidence="30">
    <location>
        <begin position="1683"/>
        <end position="1685"/>
    </location>
</feature>
<feature type="helix" evidence="30">
    <location>
        <begin position="1699"/>
        <end position="1728"/>
    </location>
</feature>
<feature type="helix" evidence="30">
    <location>
        <begin position="1731"/>
        <end position="1736"/>
    </location>
</feature>
<feature type="helix" evidence="30">
    <location>
        <begin position="1742"/>
        <end position="1745"/>
    </location>
</feature>
<feature type="strand" evidence="30">
    <location>
        <begin position="1747"/>
        <end position="1749"/>
    </location>
</feature>
<feature type="turn" evidence="30">
    <location>
        <begin position="1752"/>
        <end position="1754"/>
    </location>
</feature>
<feature type="strand" evidence="30">
    <location>
        <begin position="1755"/>
        <end position="1758"/>
    </location>
</feature>
<feature type="helix" evidence="30">
    <location>
        <begin position="1765"/>
        <end position="1778"/>
    </location>
</feature>
<feature type="helix" evidence="30">
    <location>
        <begin position="1784"/>
        <end position="1786"/>
    </location>
</feature>
<feature type="helix" evidence="30">
    <location>
        <begin position="1791"/>
        <end position="1813"/>
    </location>
</feature>
<feature type="helix" evidence="30">
    <location>
        <begin position="1818"/>
        <end position="1822"/>
    </location>
</feature>
<feature type="helix" evidence="30">
    <location>
        <begin position="1823"/>
        <end position="1826"/>
    </location>
</feature>
<feature type="helix" evidence="30">
    <location>
        <begin position="1833"/>
        <end position="1839"/>
    </location>
</feature>
<keyword id="KW-0002">3D-structure</keyword>
<keyword id="KW-0025">Alternative splicing</keyword>
<keyword id="KW-0067">ATP-binding</keyword>
<keyword id="KW-0227">DNA damage</keyword>
<keyword id="KW-1017">Isopeptide bond</keyword>
<keyword id="KW-0547">Nucleotide-binding</keyword>
<keyword id="KW-0539">Nucleus</keyword>
<keyword id="KW-0597">Phosphoprotein</keyword>
<keyword id="KW-1267">Proteomics identification</keyword>
<keyword id="KW-1185">Reference proteome</keyword>
<keyword id="KW-0832">Ubl conjugation</keyword>
<organism>
    <name type="scientific">Homo sapiens</name>
    <name type="common">Human</name>
    <dbReference type="NCBI Taxonomy" id="9606"/>
    <lineage>
        <taxon>Eukaryota</taxon>
        <taxon>Metazoa</taxon>
        <taxon>Chordata</taxon>
        <taxon>Craniata</taxon>
        <taxon>Vertebrata</taxon>
        <taxon>Euteleostomi</taxon>
        <taxon>Mammalia</taxon>
        <taxon>Eutheria</taxon>
        <taxon>Euarchontoglires</taxon>
        <taxon>Primates</taxon>
        <taxon>Haplorrhini</taxon>
        <taxon>Catarrhini</taxon>
        <taxon>Hominidae</taxon>
        <taxon>Homo</taxon>
    </lineage>
</organism>
<dbReference type="EMBL" id="AJ314648">
    <property type="protein sequence ID" value="CAC44537.2"/>
    <property type="molecule type" value="mRNA"/>
</dbReference>
<dbReference type="EMBL" id="AY557611">
    <property type="protein sequence ID" value="AAT52049.1"/>
    <property type="molecule type" value="mRNA"/>
</dbReference>
<dbReference type="EMBL" id="AL832103">
    <property type="protein sequence ID" value="CAH10412.1"/>
    <property type="molecule type" value="mRNA"/>
</dbReference>
<dbReference type="EMBL" id="BC015051">
    <property type="protein sequence ID" value="AAH15051.1"/>
    <property type="status" value="ALT_SEQ"/>
    <property type="molecule type" value="mRNA"/>
</dbReference>
<dbReference type="EMBL" id="AK022797">
    <property type="protein sequence ID" value="BAB14248.1"/>
    <property type="status" value="ALT_INIT"/>
    <property type="molecule type" value="mRNA"/>
</dbReference>
<dbReference type="EMBL" id="AC127024">
    <property type="status" value="NOT_ANNOTATED_CDS"/>
    <property type="molecule type" value="Genomic_DNA"/>
</dbReference>
<dbReference type="EMBL" id="AC130324">
    <property type="status" value="NOT_ANNOTATED_CDS"/>
    <property type="molecule type" value="Genomic_DNA"/>
</dbReference>
<dbReference type="CCDS" id="CCDS11260.1">
    <molecule id="Q96QE3-1"/>
</dbReference>
<dbReference type="RefSeq" id="NP_079133.3">
    <molecule id="Q96QE3-1"/>
    <property type="nucleotide sequence ID" value="NM_024857.4"/>
</dbReference>
<dbReference type="PDB" id="8UI7">
    <property type="method" value="EM"/>
    <property type="resolution" value="4.20 A"/>
    <property type="chains" value="A=813-1844"/>
</dbReference>
<dbReference type="PDB" id="8UI8">
    <property type="method" value="EM"/>
    <property type="resolution" value="3.10 A"/>
    <property type="chains" value="A=813-1844"/>
</dbReference>
<dbReference type="PDB" id="8UI9">
    <property type="method" value="EM"/>
    <property type="resolution" value="3.50 A"/>
    <property type="chains" value="A=813-1844"/>
</dbReference>
<dbReference type="PDB" id="8UII">
    <property type="method" value="EM"/>
    <property type="resolution" value="3.04 A"/>
    <property type="chains" value="A=1-1844"/>
</dbReference>
<dbReference type="PDBsum" id="8UI7"/>
<dbReference type="PDBsum" id="8UI8"/>
<dbReference type="PDBsum" id="8UI9"/>
<dbReference type="PDBsum" id="8UII"/>
<dbReference type="EMDB" id="EMD-42287"/>
<dbReference type="EMDB" id="EMD-42288"/>
<dbReference type="EMDB" id="EMD-42289"/>
<dbReference type="EMDB" id="EMD-42295"/>
<dbReference type="SMR" id="Q96QE3"/>
<dbReference type="BioGRID" id="122994">
    <property type="interactions" value="86"/>
</dbReference>
<dbReference type="DIP" id="DIP-62118N"/>
<dbReference type="FunCoup" id="Q96QE3">
    <property type="interactions" value="2265"/>
</dbReference>
<dbReference type="IntAct" id="Q96QE3">
    <property type="interactions" value="48"/>
</dbReference>
<dbReference type="MINT" id="Q96QE3"/>
<dbReference type="STRING" id="9606.ENSP00000313171"/>
<dbReference type="ChEMBL" id="CHEMBL1741209"/>
<dbReference type="GlyGen" id="Q96QE3">
    <property type="glycosylation" value="2 sites, 1 N-linked glycan (1 site), 1 O-linked glycan (1 site)"/>
</dbReference>
<dbReference type="iPTMnet" id="Q96QE3"/>
<dbReference type="PhosphoSitePlus" id="Q96QE3"/>
<dbReference type="BioMuta" id="ATAD5"/>
<dbReference type="DMDM" id="296439460"/>
<dbReference type="jPOST" id="Q96QE3"/>
<dbReference type="MassIVE" id="Q96QE3"/>
<dbReference type="PaxDb" id="9606-ENSP00000313171"/>
<dbReference type="PeptideAtlas" id="Q96QE3"/>
<dbReference type="ProteomicsDB" id="77862">
    <molecule id="Q96QE3-1"/>
</dbReference>
<dbReference type="ProteomicsDB" id="77863">
    <molecule id="Q96QE3-2"/>
</dbReference>
<dbReference type="Pumba" id="Q96QE3"/>
<dbReference type="Antibodypedia" id="15166">
    <property type="antibodies" value="158 antibodies from 29 providers"/>
</dbReference>
<dbReference type="DNASU" id="79915"/>
<dbReference type="Ensembl" id="ENST00000321990.5">
    <molecule id="Q96QE3-1"/>
    <property type="protein sequence ID" value="ENSP00000313171.4"/>
    <property type="gene ID" value="ENSG00000176208.9"/>
</dbReference>
<dbReference type="GeneID" id="79915"/>
<dbReference type="KEGG" id="hsa:79915"/>
<dbReference type="MANE-Select" id="ENST00000321990.5">
    <property type="protein sequence ID" value="ENSP00000313171.4"/>
    <property type="RefSeq nucleotide sequence ID" value="NM_024857.5"/>
    <property type="RefSeq protein sequence ID" value="NP_079133.3"/>
</dbReference>
<dbReference type="UCSC" id="uc002hfs.2">
    <molecule id="Q96QE3-1"/>
    <property type="organism name" value="human"/>
</dbReference>
<dbReference type="AGR" id="HGNC:25752"/>
<dbReference type="CTD" id="79915"/>
<dbReference type="DisGeNET" id="79915"/>
<dbReference type="GeneCards" id="ATAD5"/>
<dbReference type="HGNC" id="HGNC:25752">
    <property type="gene designation" value="ATAD5"/>
</dbReference>
<dbReference type="HPA" id="ENSG00000176208">
    <property type="expression patterns" value="Tissue enhanced (bone)"/>
</dbReference>
<dbReference type="MIM" id="609534">
    <property type="type" value="gene"/>
</dbReference>
<dbReference type="neXtProt" id="NX_Q96QE3"/>
<dbReference type="OpenTargets" id="ENSG00000176208"/>
<dbReference type="PharmGKB" id="PA162377100"/>
<dbReference type="VEuPathDB" id="HostDB:ENSG00000176208"/>
<dbReference type="eggNOG" id="KOG1968">
    <property type="taxonomic scope" value="Eukaryota"/>
</dbReference>
<dbReference type="GeneTree" id="ENSGT00940000153469"/>
<dbReference type="HOGENOM" id="CLU_002810_0_0_1"/>
<dbReference type="InParanoid" id="Q96QE3"/>
<dbReference type="OMA" id="KSPKKMY"/>
<dbReference type="OrthoDB" id="9996895at2759"/>
<dbReference type="PAN-GO" id="Q96QE3">
    <property type="GO annotations" value="3 GO annotations based on evolutionary models"/>
</dbReference>
<dbReference type="PhylomeDB" id="Q96QE3"/>
<dbReference type="TreeFam" id="TF329112"/>
<dbReference type="PathwayCommons" id="Q96QE3"/>
<dbReference type="SignaLink" id="Q96QE3"/>
<dbReference type="SIGNOR" id="Q96QE3"/>
<dbReference type="BioGRID-ORCS" id="79915">
    <property type="hits" value="89 hits in 1158 CRISPR screens"/>
</dbReference>
<dbReference type="ChiTaRS" id="ATAD5">
    <property type="organism name" value="human"/>
</dbReference>
<dbReference type="GenomeRNAi" id="79915"/>
<dbReference type="Pharos" id="Q96QE3">
    <property type="development level" value="Tbio"/>
</dbReference>
<dbReference type="PRO" id="PR:Q96QE3"/>
<dbReference type="Proteomes" id="UP000005640">
    <property type="component" value="Chromosome 17"/>
</dbReference>
<dbReference type="RNAct" id="Q96QE3">
    <property type="molecule type" value="protein"/>
</dbReference>
<dbReference type="Bgee" id="ENSG00000176208">
    <property type="expression patterns" value="Expressed in buccal mucosa cell and 100 other cell types or tissues"/>
</dbReference>
<dbReference type="ExpressionAtlas" id="Q96QE3">
    <property type="expression patterns" value="baseline and differential"/>
</dbReference>
<dbReference type="GO" id="GO:0031391">
    <property type="term" value="C:Elg1 RFC-like complex"/>
    <property type="evidence" value="ECO:0000314"/>
    <property type="project" value="UniProtKB"/>
</dbReference>
<dbReference type="GO" id="GO:0005634">
    <property type="term" value="C:nucleus"/>
    <property type="evidence" value="ECO:0000318"/>
    <property type="project" value="GO_Central"/>
</dbReference>
<dbReference type="GO" id="GO:0005524">
    <property type="term" value="F:ATP binding"/>
    <property type="evidence" value="ECO:0007669"/>
    <property type="project" value="UniProtKB-KW"/>
</dbReference>
<dbReference type="GO" id="GO:0016887">
    <property type="term" value="F:ATP hydrolysis activity"/>
    <property type="evidence" value="ECO:0007669"/>
    <property type="project" value="InterPro"/>
</dbReference>
<dbReference type="GO" id="GO:0003677">
    <property type="term" value="F:DNA binding"/>
    <property type="evidence" value="ECO:0000318"/>
    <property type="project" value="GO_Central"/>
</dbReference>
<dbReference type="GO" id="GO:0061860">
    <property type="term" value="F:DNA clamp unloader activity"/>
    <property type="evidence" value="ECO:0000315"/>
    <property type="project" value="UniProtKB"/>
</dbReference>
<dbReference type="GO" id="GO:0008283">
    <property type="term" value="P:cell population proliferation"/>
    <property type="evidence" value="ECO:0007669"/>
    <property type="project" value="Ensembl"/>
</dbReference>
<dbReference type="GO" id="GO:0042771">
    <property type="term" value="P:intrinsic apoptotic signaling pathway in response to DNA damage by p53 class mediator"/>
    <property type="evidence" value="ECO:0007669"/>
    <property type="project" value="Ensembl"/>
</dbReference>
<dbReference type="GO" id="GO:0045190">
    <property type="term" value="P:isotype switching"/>
    <property type="evidence" value="ECO:0007669"/>
    <property type="project" value="Ensembl"/>
</dbReference>
<dbReference type="GO" id="GO:1902166">
    <property type="term" value="P:negative regulation of intrinsic apoptotic signaling pathway in response to DNA damage by p53 class mediator"/>
    <property type="evidence" value="ECO:0007669"/>
    <property type="project" value="Ensembl"/>
</dbReference>
<dbReference type="GO" id="GO:0033260">
    <property type="term" value="P:nuclear DNA replication"/>
    <property type="evidence" value="ECO:0007669"/>
    <property type="project" value="Ensembl"/>
</dbReference>
<dbReference type="GO" id="GO:0030890">
    <property type="term" value="P:positive regulation of B cell proliferation"/>
    <property type="evidence" value="ECO:0007669"/>
    <property type="project" value="Ensembl"/>
</dbReference>
<dbReference type="GO" id="GO:1902751">
    <property type="term" value="P:positive regulation of cell cycle G2/M phase transition"/>
    <property type="evidence" value="ECO:0000315"/>
    <property type="project" value="UniProtKB"/>
</dbReference>
<dbReference type="GO" id="GO:0045740">
    <property type="term" value="P:positive regulation of DNA replication"/>
    <property type="evidence" value="ECO:0000315"/>
    <property type="project" value="UniProtKB"/>
</dbReference>
<dbReference type="GO" id="GO:0048304">
    <property type="term" value="P:positive regulation of isotype switching to IgG isotypes"/>
    <property type="evidence" value="ECO:0007669"/>
    <property type="project" value="Ensembl"/>
</dbReference>
<dbReference type="GO" id="GO:1901990">
    <property type="term" value="P:regulation of mitotic cell cycle phase transition"/>
    <property type="evidence" value="ECO:0007669"/>
    <property type="project" value="Ensembl"/>
</dbReference>
<dbReference type="GO" id="GO:0042770">
    <property type="term" value="P:signal transduction in response to DNA damage"/>
    <property type="evidence" value="ECO:0007669"/>
    <property type="project" value="Ensembl"/>
</dbReference>
<dbReference type="FunFam" id="3.40.50.300:FF:000846">
    <property type="entry name" value="ATPase family AAA domain-containing protein 5"/>
    <property type="match status" value="1"/>
</dbReference>
<dbReference type="FunFam" id="3.40.50.300:FF:001246">
    <property type="entry name" value="ATPase family AAA domain-containing protein 5"/>
    <property type="match status" value="1"/>
</dbReference>
<dbReference type="Gene3D" id="3.40.50.300">
    <property type="entry name" value="P-loop containing nucleotide triphosphate hydrolases"/>
    <property type="match status" value="2"/>
</dbReference>
<dbReference type="InterPro" id="IPR003593">
    <property type="entry name" value="AAA+_ATPase"/>
</dbReference>
<dbReference type="InterPro" id="IPR003959">
    <property type="entry name" value="ATPase_AAA_core"/>
</dbReference>
<dbReference type="InterPro" id="IPR027417">
    <property type="entry name" value="P-loop_NTPase"/>
</dbReference>
<dbReference type="PANTHER" id="PTHR23389:SF21">
    <property type="entry name" value="ATPASE FAMILY AAA DOMAIN-CONTAINING PROTEIN 5"/>
    <property type="match status" value="1"/>
</dbReference>
<dbReference type="PANTHER" id="PTHR23389">
    <property type="entry name" value="CHROMOSOME TRANSMISSION FIDELITY FACTOR 18"/>
    <property type="match status" value="1"/>
</dbReference>
<dbReference type="Pfam" id="PF00004">
    <property type="entry name" value="AAA"/>
    <property type="match status" value="1"/>
</dbReference>
<dbReference type="SMART" id="SM00382">
    <property type="entry name" value="AAA"/>
    <property type="match status" value="1"/>
</dbReference>
<dbReference type="SUPFAM" id="SSF52540">
    <property type="entry name" value="P-loop containing nucleoside triphosphate hydrolases"/>
    <property type="match status" value="1"/>
</dbReference>
<accession>Q96QE3</accession>
<accession>Q05DH0</accession>
<accession>Q69YR6</accession>
<accession>Q9H9I1</accession>
<sequence length="1844" mass="207570">MVGVLAMAAAAAPPPVKDCEIEPCKKRKKDDDTSTCKTITKYLSPLGKTRDRVFAPPKPSNILDYFRKTSPTNEKTQLGKECKIKSPESVPVDSNKDCTTPLEMFSNVEFKKKRKRVNLSHQLNNIKTENEAPIEISSDDSKEDYSLNNDFVESSTSVLRYKKQVEVLAENIQDTKSQPNTMTSLQNSKKVNPKQGTTKNDFKKLRKRKCRDVVDLSESLPLAEELNLLKKDGKDTKQMENTTSHANSRDNVTEAAQLNDSIITVSYEEFLKSHKENKVEEIPDSTMSICVPSETVDEIVKSGYISESENSEISQQVRFKTVTVLAQVHPIPPKKTGKIPRIFLKQKQFEMENSLSDPENEQTVQKRKSNVVIQEEELELAVLEAGSSEAVKPKCTLEERQQFMKAFRQPASDALKNGVKKSSDKQKDLNEKCLYEVGRDDNSKKIMENSGIQMVSKNGNLQLHTDKGSFLKEKNKKLKKKNKKTLDTGAIPGKNREGNTQKKETTFFLKEKQYQNRMSLRQRKTEFFKSSTLFNNESLVYEDIANDDLLKVSSLCNNNKLSRKTSIPVKDIKLTQSKAESEASLLNVSTPKSTRRSGRISSTPTTETIRGIDSDDVQDNSQLKASTQKAANLSEKHSLYTAELITVPFDSESPIRMKFTRISTPKKSKKKSNKRSEKSEATDGGFTSQIRKASNTSKNISKAKQLIEKAKALHISRSKVTEEIAIPLRRSSRHQTLPERKKLSETEDSVIIIDSSPTALKHPEKNQKKLQCLNDVLGKKLNTSTKNVPGKMKVAPLFLVRKAQKAADPVPSFDESSQDTSEKSQDCDVQCKAKRDFLMSGLPDLLKRQIAKKAAALDVYNAVSTSFQRVVHVQQKDDGCCLWHLKPPSCPLLTKFKELNTKVIDLSKCGIALGEFSTLNSKLKSGNSAAVFMRTRKEFTEEVRNLLLEEIRWSNPEFSLKKYFPLLLKKQIEHQVLSSECHSKQELEADVSHKETKRKLVEAENSKSKRKKPNEYSKNLEKTNRKSEELSKRNNSSGIKLDSSKDSGTEDMLWTEKYQPQTASELIGNELAIKKLHSWLKDWKRRAELEERQNLKGKRDEKHEDFSGGIDFKGSSDDEEESRLCNTVLITGPTGVGKTAAVYACAQELGFKIFEVNASSQRSGRQILSQLKEATQSHQVDKQGVNSQKPCFFNSYYIGKSPKKISSPKKVVTSPRKVPPPSPKSSGPKRALPPKTLANYFKVSPKPKNNEEIGMLLENNKGIKNSFEQKQITQTKSTNATNSNVKDVGAEEPSRKNATSLILFEEVDVIFDEDAGFLNAIKTFMATTKRPVILTTSDPTFSLMFDGCFEEIKFSTPSLLNVASYLQMICLTENFRTDVKDFVTLLTANTCDIRKSILYLQFWIRSGGGVLEERPLTLYRGNSRNVQLVCSEHGLDNKIYPKNTKKKRVDLPKCDSGCAETLFGLKNIFSPSEDLFSFLKHKITMKEEWHKFIQLLTEFQMRNVDFLYSNLEFILPLPVDTIPETKNFCGPSVTVDASAATKSMNCLARKHSEREQPLKKSQKKKQKKTLVILDDSDLFDTDLDFPDQSISLSSVSSSSNAEESKTGDEESKARDKGNNPETKKSIPCPPKTTAGKKCSALVSHCLNSLSEFMDNMSFLDALLTDVREQNKYGRNDFSWTNGKVTSGLCDEFSLESNDGWTSQSSGELKAAAEALSFTKCSSAISKALETLNSCKKLGRDPTNDLTFYVSQKRNNVYFSQSAANLDNAWKRISVIKSVFSSRSLLYVGNRQASIIEYLPTLRNICKTEKLKEQGKSKRRFLHYFEGIHLDIPKETVNTLAADFP</sequence>
<name>ATAD5_HUMAN</name>